<protein>
    <recommendedName>
        <fullName>Omega-conotoxin-like 6</fullName>
    </recommendedName>
</protein>
<dbReference type="EMBL" id="AJ851175">
    <property type="protein sequence ID" value="CAH64848.1"/>
    <property type="molecule type" value="mRNA"/>
</dbReference>
<dbReference type="SMR" id="Q5K0D3"/>
<dbReference type="ConoServer" id="1064">
    <property type="toxin name" value="SO5 precursor"/>
</dbReference>
<dbReference type="GO" id="GO:0005576">
    <property type="term" value="C:extracellular region"/>
    <property type="evidence" value="ECO:0007669"/>
    <property type="project" value="UniProtKB-SubCell"/>
</dbReference>
<dbReference type="GO" id="GO:0044231">
    <property type="term" value="C:host cell presynaptic membrane"/>
    <property type="evidence" value="ECO:0007669"/>
    <property type="project" value="UniProtKB-KW"/>
</dbReference>
<dbReference type="GO" id="GO:0005246">
    <property type="term" value="F:calcium channel regulator activity"/>
    <property type="evidence" value="ECO:0007669"/>
    <property type="project" value="UniProtKB-KW"/>
</dbReference>
<dbReference type="GO" id="GO:0008200">
    <property type="term" value="F:ion channel inhibitor activity"/>
    <property type="evidence" value="ECO:0007669"/>
    <property type="project" value="InterPro"/>
</dbReference>
<dbReference type="GO" id="GO:0090729">
    <property type="term" value="F:toxin activity"/>
    <property type="evidence" value="ECO:0007669"/>
    <property type="project" value="UniProtKB-KW"/>
</dbReference>
<dbReference type="InterPro" id="IPR004214">
    <property type="entry name" value="Conotoxin"/>
</dbReference>
<dbReference type="InterPro" id="IPR012321">
    <property type="entry name" value="Conotoxin_omega-typ_CS"/>
</dbReference>
<dbReference type="Pfam" id="PF02950">
    <property type="entry name" value="Conotoxin"/>
    <property type="match status" value="1"/>
</dbReference>
<dbReference type="PROSITE" id="PS60004">
    <property type="entry name" value="OMEGA_CONOTOXIN"/>
    <property type="match status" value="1"/>
</dbReference>
<accession>Q5K0D3</accession>
<keyword id="KW-0108">Calcium channel impairing toxin</keyword>
<keyword id="KW-1015">Disulfide bond</keyword>
<keyword id="KW-0872">Ion channel impairing toxin</keyword>
<keyword id="KW-0960">Knottin</keyword>
<keyword id="KW-0528">Neurotoxin</keyword>
<keyword id="KW-0638">Presynaptic neurotoxin</keyword>
<keyword id="KW-0964">Secreted</keyword>
<keyword id="KW-0732">Signal</keyword>
<keyword id="KW-0800">Toxin</keyword>
<keyword id="KW-1218">Voltage-gated calcium channel impairing toxin</keyword>
<evidence type="ECO:0000250" key="1"/>
<evidence type="ECO:0000255" key="2"/>
<evidence type="ECO:0000305" key="3"/>
<organism>
    <name type="scientific">Conus striatus</name>
    <name type="common">Striated cone</name>
    <dbReference type="NCBI Taxonomy" id="6493"/>
    <lineage>
        <taxon>Eukaryota</taxon>
        <taxon>Metazoa</taxon>
        <taxon>Spiralia</taxon>
        <taxon>Lophotrochozoa</taxon>
        <taxon>Mollusca</taxon>
        <taxon>Gastropoda</taxon>
        <taxon>Caenogastropoda</taxon>
        <taxon>Neogastropoda</taxon>
        <taxon>Conoidea</taxon>
        <taxon>Conidae</taxon>
        <taxon>Conus</taxon>
        <taxon>Pionoconus</taxon>
    </lineage>
</organism>
<proteinExistence type="evidence at transcript level"/>
<reference key="1">
    <citation type="journal article" date="2005" name="Peptides">
        <title>Direct cDNA cloning of novel conopeptide precursors of the O-superfamily.</title>
        <authorList>
            <person name="Kauferstein S."/>
            <person name="Melaun C."/>
            <person name="Mebs D."/>
        </authorList>
    </citation>
    <scope>NUCLEOTIDE SEQUENCE [MRNA]</scope>
    <source>
        <tissue>Venom duct</tissue>
    </source>
</reference>
<feature type="signal peptide" evidence="2">
    <location>
        <begin position="1"/>
        <end position="22"/>
    </location>
</feature>
<feature type="propeptide" id="PRO_0000034942" evidence="1">
    <location>
        <begin position="23"/>
        <end position="50"/>
    </location>
</feature>
<feature type="peptide" id="PRO_0000034943" description="Omega-conotoxin-like 6">
    <location>
        <begin position="51"/>
        <end position="77"/>
    </location>
</feature>
<feature type="disulfide bond" evidence="1">
    <location>
        <begin position="46"/>
        <end position="61"/>
    </location>
</feature>
<feature type="disulfide bond" evidence="1">
    <location>
        <begin position="53"/>
        <end position="64"/>
    </location>
</feature>
<feature type="disulfide bond" evidence="1">
    <location>
        <begin position="60"/>
        <end position="71"/>
    </location>
</feature>
<name>O16L6_CONST</name>
<sequence length="77" mass="8352">MKLTCVVIIAVLLLTACQLITADDSRGVQKHRSLRSTTKVSKSTSCMEAGSYCGSTTRICCGYCAYFGKKCIDYPSN</sequence>
<comment type="function">
    <text evidence="1">Omega-conotoxins act at presynaptic membranes, they bind and block voltage-gated calcium channels (Cav).</text>
</comment>
<comment type="subcellular location">
    <subcellularLocation>
        <location evidence="1">Secreted</location>
    </subcellularLocation>
</comment>
<comment type="tissue specificity">
    <text>Expressed by the venom duct.</text>
</comment>
<comment type="domain">
    <text evidence="1">The presence of a 'disulfide through disulfide knot' structurally defines this protein as a knottin.</text>
</comment>
<comment type="domain">
    <text>The cysteine framework is VI/VII (C-C-CC-C-C).</text>
</comment>
<comment type="similarity">
    <text evidence="3">Belongs to the conotoxin O1 superfamily.</text>
</comment>